<organism>
    <name type="scientific">Paracidovorax citrulli (strain AAC00-1)</name>
    <name type="common">Acidovorax citrulli</name>
    <dbReference type="NCBI Taxonomy" id="397945"/>
    <lineage>
        <taxon>Bacteria</taxon>
        <taxon>Pseudomonadati</taxon>
        <taxon>Pseudomonadota</taxon>
        <taxon>Betaproteobacteria</taxon>
        <taxon>Burkholderiales</taxon>
        <taxon>Comamonadaceae</taxon>
        <taxon>Paracidovorax</taxon>
    </lineage>
</organism>
<reference key="1">
    <citation type="submission" date="2006-12" db="EMBL/GenBank/DDBJ databases">
        <title>Complete sequence of Acidovorax avenae subsp. citrulli AAC00-1.</title>
        <authorList>
            <person name="Copeland A."/>
            <person name="Lucas S."/>
            <person name="Lapidus A."/>
            <person name="Barry K."/>
            <person name="Detter J.C."/>
            <person name="Glavina del Rio T."/>
            <person name="Dalin E."/>
            <person name="Tice H."/>
            <person name="Pitluck S."/>
            <person name="Kiss H."/>
            <person name="Brettin T."/>
            <person name="Bruce D."/>
            <person name="Han C."/>
            <person name="Tapia R."/>
            <person name="Gilna P."/>
            <person name="Schmutz J."/>
            <person name="Larimer F."/>
            <person name="Land M."/>
            <person name="Hauser L."/>
            <person name="Kyrpides N."/>
            <person name="Kim E."/>
            <person name="Stahl D."/>
            <person name="Richardson P."/>
        </authorList>
    </citation>
    <scope>NUCLEOTIDE SEQUENCE [LARGE SCALE GENOMIC DNA]</scope>
    <source>
        <strain>AAC00-1</strain>
    </source>
</reference>
<evidence type="ECO:0000255" key="1">
    <source>
        <dbReference type="HAMAP-Rule" id="MF_00048"/>
    </source>
</evidence>
<evidence type="ECO:0000256" key="2">
    <source>
        <dbReference type="SAM" id="MobiDB-lite"/>
    </source>
</evidence>
<gene>
    <name type="ordered locus">Aave_0630</name>
</gene>
<comment type="similarity">
    <text evidence="1">Belongs to the UPF0102 family.</text>
</comment>
<feature type="chain" id="PRO_0000336111" description="UPF0102 protein Aave_0630">
    <location>
        <begin position="1"/>
        <end position="135"/>
    </location>
</feature>
<feature type="region of interest" description="Disordered" evidence="2">
    <location>
        <begin position="1"/>
        <end position="21"/>
    </location>
</feature>
<dbReference type="EMBL" id="CP000512">
    <property type="protein sequence ID" value="ABM31234.1"/>
    <property type="molecule type" value="Genomic_DNA"/>
</dbReference>
<dbReference type="RefSeq" id="WP_011793805.1">
    <property type="nucleotide sequence ID" value="NC_008752.1"/>
</dbReference>
<dbReference type="SMR" id="A1TJU6"/>
<dbReference type="STRING" id="397945.Aave_0630"/>
<dbReference type="KEGG" id="aav:Aave_0630"/>
<dbReference type="eggNOG" id="COG0792">
    <property type="taxonomic scope" value="Bacteria"/>
</dbReference>
<dbReference type="HOGENOM" id="CLU_115353_1_0_4"/>
<dbReference type="OrthoDB" id="9794876at2"/>
<dbReference type="Proteomes" id="UP000002596">
    <property type="component" value="Chromosome"/>
</dbReference>
<dbReference type="GO" id="GO:0003676">
    <property type="term" value="F:nucleic acid binding"/>
    <property type="evidence" value="ECO:0007669"/>
    <property type="project" value="InterPro"/>
</dbReference>
<dbReference type="Gene3D" id="3.40.1350.10">
    <property type="match status" value="1"/>
</dbReference>
<dbReference type="HAMAP" id="MF_00048">
    <property type="entry name" value="UPF0102"/>
    <property type="match status" value="1"/>
</dbReference>
<dbReference type="InterPro" id="IPR011335">
    <property type="entry name" value="Restrct_endonuc-II-like"/>
</dbReference>
<dbReference type="InterPro" id="IPR011856">
    <property type="entry name" value="tRNA_endonuc-like_dom_sf"/>
</dbReference>
<dbReference type="InterPro" id="IPR003509">
    <property type="entry name" value="UPF0102_YraN-like"/>
</dbReference>
<dbReference type="NCBIfam" id="NF009150">
    <property type="entry name" value="PRK12497.1-3"/>
    <property type="match status" value="1"/>
</dbReference>
<dbReference type="NCBIfam" id="TIGR00252">
    <property type="entry name" value="YraN family protein"/>
    <property type="match status" value="1"/>
</dbReference>
<dbReference type="PANTHER" id="PTHR34039">
    <property type="entry name" value="UPF0102 PROTEIN YRAN"/>
    <property type="match status" value="1"/>
</dbReference>
<dbReference type="PANTHER" id="PTHR34039:SF1">
    <property type="entry name" value="UPF0102 PROTEIN YRAN"/>
    <property type="match status" value="1"/>
</dbReference>
<dbReference type="Pfam" id="PF02021">
    <property type="entry name" value="UPF0102"/>
    <property type="match status" value="1"/>
</dbReference>
<dbReference type="SUPFAM" id="SSF52980">
    <property type="entry name" value="Restriction endonuclease-like"/>
    <property type="match status" value="1"/>
</dbReference>
<name>Y630_PARC0</name>
<accession>A1TJU6</accession>
<protein>
    <recommendedName>
        <fullName evidence="1">UPF0102 protein Aave_0630</fullName>
    </recommendedName>
</protein>
<proteinExistence type="inferred from homology"/>
<sequence>MGILEKKTAGPGGAARKTTTRAAGMAAEDRALAHLQAAGLRLLARNYRTPGRGGGEIDLILRDRDGTLVFVEVRSRASDAYGGAGASIGAAKRRRIVFAARHYLLRWPSPPPCRFDAVLVSGDAVQWLQAAFDAG</sequence>